<accession>Q6S004</accession>
<accession>Q55F66</accession>
<accession>Q94499</accession>
<reference key="1">
    <citation type="journal article" date="2003" name="BMC Genomics">
        <title>Identification and phylogenetic analysis of Dictyostelium discoideum kinesin proteins.</title>
        <authorList>
            <person name="Kollmar M."/>
            <person name="Gloeckner G."/>
        </authorList>
    </citation>
    <scope>NUCLEOTIDE SEQUENCE [GENOMIC DNA]</scope>
    <scope>IDENTIFICATION</scope>
    <scope>NOMENCLATURE</scope>
    <source>
        <strain>AX4</strain>
    </source>
</reference>
<reference key="2">
    <citation type="journal article" date="2005" name="Nature">
        <title>The genome of the social amoeba Dictyostelium discoideum.</title>
        <authorList>
            <person name="Eichinger L."/>
            <person name="Pachebat J.A."/>
            <person name="Gloeckner G."/>
            <person name="Rajandream M.A."/>
            <person name="Sucgang R."/>
            <person name="Berriman M."/>
            <person name="Song J."/>
            <person name="Olsen R."/>
            <person name="Szafranski K."/>
            <person name="Xu Q."/>
            <person name="Tunggal B."/>
            <person name="Kummerfeld S."/>
            <person name="Madera M."/>
            <person name="Konfortov B.A."/>
            <person name="Rivero F."/>
            <person name="Bankier A.T."/>
            <person name="Lehmann R."/>
            <person name="Hamlin N."/>
            <person name="Davies R."/>
            <person name="Gaudet P."/>
            <person name="Fey P."/>
            <person name="Pilcher K."/>
            <person name="Chen G."/>
            <person name="Saunders D."/>
            <person name="Sodergren E.J."/>
            <person name="Davis P."/>
            <person name="Kerhornou A."/>
            <person name="Nie X."/>
            <person name="Hall N."/>
            <person name="Anjard C."/>
            <person name="Hemphill L."/>
            <person name="Bason N."/>
            <person name="Farbrother P."/>
            <person name="Desany B."/>
            <person name="Just E."/>
            <person name="Morio T."/>
            <person name="Rost R."/>
            <person name="Churcher C.M."/>
            <person name="Cooper J."/>
            <person name="Haydock S."/>
            <person name="van Driessche N."/>
            <person name="Cronin A."/>
            <person name="Goodhead I."/>
            <person name="Muzny D.M."/>
            <person name="Mourier T."/>
            <person name="Pain A."/>
            <person name="Lu M."/>
            <person name="Harper D."/>
            <person name="Lindsay R."/>
            <person name="Hauser H."/>
            <person name="James K.D."/>
            <person name="Quiles M."/>
            <person name="Madan Babu M."/>
            <person name="Saito T."/>
            <person name="Buchrieser C."/>
            <person name="Wardroper A."/>
            <person name="Felder M."/>
            <person name="Thangavelu M."/>
            <person name="Johnson D."/>
            <person name="Knights A."/>
            <person name="Loulseged H."/>
            <person name="Mungall K.L."/>
            <person name="Oliver K."/>
            <person name="Price C."/>
            <person name="Quail M.A."/>
            <person name="Urushihara H."/>
            <person name="Hernandez J."/>
            <person name="Rabbinowitsch E."/>
            <person name="Steffen D."/>
            <person name="Sanders M."/>
            <person name="Ma J."/>
            <person name="Kohara Y."/>
            <person name="Sharp S."/>
            <person name="Simmonds M.N."/>
            <person name="Spiegler S."/>
            <person name="Tivey A."/>
            <person name="Sugano S."/>
            <person name="White B."/>
            <person name="Walker D."/>
            <person name="Woodward J.R."/>
            <person name="Winckler T."/>
            <person name="Tanaka Y."/>
            <person name="Shaulsky G."/>
            <person name="Schleicher M."/>
            <person name="Weinstock G.M."/>
            <person name="Rosenthal A."/>
            <person name="Cox E.C."/>
            <person name="Chisholm R.L."/>
            <person name="Gibbs R.A."/>
            <person name="Loomis W.F."/>
            <person name="Platzer M."/>
            <person name="Kay R.R."/>
            <person name="Williams J.G."/>
            <person name="Dear P.H."/>
            <person name="Noegel A.A."/>
            <person name="Barrell B.G."/>
            <person name="Kuspa A."/>
        </authorList>
    </citation>
    <scope>NUCLEOTIDE SEQUENCE [LARGE SCALE GENOMIC DNA]</scope>
    <source>
        <strain>AX4</strain>
    </source>
</reference>
<reference key="3">
    <citation type="journal article" date="1998" name="Mol. Biol. Cell">
        <title>A developmentally regulated kinesin-related motor protein from Dictyostelium discoideum.</title>
        <authorList>
            <person name="de Hostos E.L."/>
            <person name="McCaffrey G."/>
            <person name="Sucgang R."/>
            <person name="Pierce D.W."/>
            <person name="Vale R.D."/>
        </authorList>
    </citation>
    <scope>NUCLEOTIDE SEQUENCE [MRNA] OF 440-758</scope>
    <scope>INDUCTION</scope>
    <source>
        <strain>AX3</strain>
    </source>
</reference>
<feature type="chain" id="PRO_0000365581" description="Kinesin-related protein 6">
    <location>
        <begin position="1"/>
        <end position="1030"/>
    </location>
</feature>
<feature type="domain" description="SAM" evidence="2">
    <location>
        <begin position="3"/>
        <end position="66"/>
    </location>
</feature>
<feature type="domain" description="Kinesin motor" evidence="3">
    <location>
        <begin position="453"/>
        <end position="775"/>
    </location>
</feature>
<feature type="region of interest" description="Disordered" evidence="4">
    <location>
        <begin position="66"/>
        <end position="164"/>
    </location>
</feature>
<feature type="region of interest" description="Disordered" evidence="4">
    <location>
        <begin position="178"/>
        <end position="308"/>
    </location>
</feature>
<feature type="region of interest" description="Disordered" evidence="4">
    <location>
        <begin position="826"/>
        <end position="915"/>
    </location>
</feature>
<feature type="region of interest" description="Disordered" evidence="4">
    <location>
        <begin position="981"/>
        <end position="1030"/>
    </location>
</feature>
<feature type="compositionally biased region" description="Polar residues" evidence="4">
    <location>
        <begin position="68"/>
        <end position="80"/>
    </location>
</feature>
<feature type="compositionally biased region" description="Low complexity" evidence="4">
    <location>
        <begin position="81"/>
        <end position="117"/>
    </location>
</feature>
<feature type="compositionally biased region" description="Low complexity" evidence="4">
    <location>
        <begin position="125"/>
        <end position="164"/>
    </location>
</feature>
<feature type="compositionally biased region" description="Low complexity" evidence="4">
    <location>
        <begin position="181"/>
        <end position="197"/>
    </location>
</feature>
<feature type="compositionally biased region" description="Low complexity" evidence="4">
    <location>
        <begin position="225"/>
        <end position="238"/>
    </location>
</feature>
<feature type="compositionally biased region" description="Acidic residues" evidence="4">
    <location>
        <begin position="239"/>
        <end position="290"/>
    </location>
</feature>
<feature type="compositionally biased region" description="Low complexity" evidence="4">
    <location>
        <begin position="826"/>
        <end position="839"/>
    </location>
</feature>
<feature type="compositionally biased region" description="Low complexity" evidence="4">
    <location>
        <begin position="849"/>
        <end position="906"/>
    </location>
</feature>
<feature type="compositionally biased region" description="Low complexity" evidence="4">
    <location>
        <begin position="981"/>
        <end position="1009"/>
    </location>
</feature>
<feature type="binding site" evidence="3">
    <location>
        <begin position="543"/>
        <end position="550"/>
    </location>
    <ligand>
        <name>ATP</name>
        <dbReference type="ChEBI" id="CHEBI:30616"/>
    </ligand>
</feature>
<name>KIF6_DICDI</name>
<keyword id="KW-0067">ATP-binding</keyword>
<keyword id="KW-0963">Cytoplasm</keyword>
<keyword id="KW-0206">Cytoskeleton</keyword>
<keyword id="KW-0493">Microtubule</keyword>
<keyword id="KW-0505">Motor protein</keyword>
<keyword id="KW-0547">Nucleotide-binding</keyword>
<keyword id="KW-1185">Reference proteome</keyword>
<keyword id="KW-0813">Transport</keyword>
<organism>
    <name type="scientific">Dictyostelium discoideum</name>
    <name type="common">Social amoeba</name>
    <dbReference type="NCBI Taxonomy" id="44689"/>
    <lineage>
        <taxon>Eukaryota</taxon>
        <taxon>Amoebozoa</taxon>
        <taxon>Evosea</taxon>
        <taxon>Eumycetozoa</taxon>
        <taxon>Dictyostelia</taxon>
        <taxon>Dictyosteliales</taxon>
        <taxon>Dictyosteliaceae</taxon>
        <taxon>Dictyostelium</taxon>
    </lineage>
</organism>
<comment type="function">
    <text evidence="1">Microtubule-associated force-producing protein that plays a role in organelle transport. Its motor activity is directed toward the microtubule's plus end (By similarity).</text>
</comment>
<comment type="subcellular location">
    <subcellularLocation>
        <location evidence="6">Cytoplasm</location>
        <location evidence="6">Cytoskeleton</location>
    </subcellularLocation>
</comment>
<comment type="induction">
    <text evidence="5">During the developmental stage.</text>
</comment>
<comment type="similarity">
    <text evidence="3">Belongs to the TRAFAC class myosin-kinesin ATPase superfamily. Kinesin family.</text>
</comment>
<proteinExistence type="evidence at transcript level"/>
<sequence length="1030" mass="118658">MDFENDQLYNWLQLANLESFYPNFIKKNVSCDSFLSFTMQDYGNVGITSLQDRKKLFHLLQQLKKQTPPISNTSSPVINSNNNNNNNNNNNNNNNNNNNNNNNNNNNNNNNNNNNNNSSGLRQPTSTSSLLSNNNLMSTQTQQSSSSSSSSSLSSKSNSNSDFMQKAQQLLKQRELERQQYAKQQQQQQSTQTKYQSSLKDFDITSSNKNNNLDDFFEDDNLYSQQQQQQQQQQQQQDFEFEEEEEEEDQQQQYDEEEEEEEEYEEDFYKEDLGEIDDGNVLDISDDEPDPNSSCIIVEGSPDEEDDDVEYIPQNESLVNGFGSMKIQQQQQQQFQPLQQQQQQQQQQQQQFYQQQIQQQQQQQQQQQQQQVQQQQQQFNNFNYSGLNEEQIKYYQQQAQYQQQVQQAQQAAIQQAQQAAALAQASQQQLQQQEQQRQQASNFFLDMNEYGQRIRVCVRKRPLNKKEIAKSEKDIIEVLPKKDLIVNEPKTKLDLSKFIEKHKFTFDGVFDESANNYQVYLHTAYPLVDSIFHKGKATCFAYGQTGSGKTHTQMGQQGDGLYALAARDIFHRLETYFKDQLQVCISFFEIYGGKLFDLLNERKKLACRENELQNVVIVGLSEKHVTSPQELMNCIIDGNKIRSTGSTGVNSDSSRSHAILQISLKNIKTNKLHGKFSFIDLAGSERGSDTYDNDKQTRKEGADINKSLLALKECIRALDQSSKHTPFRQSTLTQVLKDSFVGNSRTVMIANISPNQSSSEHTLNTLRYADRVKELGTSESNSNKKPVATYNIPAPLPPPDHLKQNFNDPILIPSTTTTTTTTATAINSQQPIIQQTSQPVSKIKQPVKQQQESQIPQTPQQQQQQQPPQQQPQQQQYNIPQTPQQTQQQFNIPQTPKQQQPIQTQPPMSPPKIDFVNYHRNHVDQFADILKKELISINQFESSKGSIPLENYINNIEQFLDSKQLLINHLRGIIQQHQQQPIQQQQQQQQPIQQQQQSTPQPSQLQTPQQRERARSQLQPPKPSIYSSRN</sequence>
<protein>
    <recommendedName>
        <fullName>Kinesin-related protein 6</fullName>
    </recommendedName>
    <alternativeName>
        <fullName>Kinesin family member 6</fullName>
    </alternativeName>
    <alternativeName>
        <fullName>Kinesin-13</fullName>
    </alternativeName>
</protein>
<evidence type="ECO:0000250" key="1"/>
<evidence type="ECO:0000255" key="2">
    <source>
        <dbReference type="PROSITE-ProRule" id="PRU00184"/>
    </source>
</evidence>
<evidence type="ECO:0000255" key="3">
    <source>
        <dbReference type="PROSITE-ProRule" id="PRU00283"/>
    </source>
</evidence>
<evidence type="ECO:0000256" key="4">
    <source>
        <dbReference type="SAM" id="MobiDB-lite"/>
    </source>
</evidence>
<evidence type="ECO:0000269" key="5">
    <source>
    </source>
</evidence>
<evidence type="ECO:0000305" key="6"/>
<dbReference type="EMBL" id="AY484461">
    <property type="protein sequence ID" value="AAR39437.1"/>
    <property type="molecule type" value="Genomic_DNA"/>
</dbReference>
<dbReference type="EMBL" id="AAFI02000003">
    <property type="protein sequence ID" value="EAL73154.1"/>
    <property type="molecule type" value="Genomic_DNA"/>
</dbReference>
<dbReference type="EMBL" id="U69984">
    <property type="protein sequence ID" value="AAB09082.1"/>
    <property type="molecule type" value="mRNA"/>
</dbReference>
<dbReference type="RefSeq" id="XP_647667.1">
    <property type="nucleotide sequence ID" value="XM_642575.1"/>
</dbReference>
<dbReference type="SMR" id="Q6S004"/>
<dbReference type="FunCoup" id="Q6S004">
    <property type="interactions" value="2"/>
</dbReference>
<dbReference type="STRING" id="44689.Q6S004"/>
<dbReference type="PaxDb" id="44689-DDB0191499"/>
<dbReference type="EnsemblProtists" id="EAL73154">
    <property type="protein sequence ID" value="EAL73154"/>
    <property type="gene ID" value="DDB_G0267404"/>
</dbReference>
<dbReference type="GeneID" id="8616484"/>
<dbReference type="KEGG" id="ddi:DDB_G0267404"/>
<dbReference type="dictyBase" id="DDB_G0267404">
    <property type="gene designation" value="kif6"/>
</dbReference>
<dbReference type="VEuPathDB" id="AmoebaDB:DDB_G0267404"/>
<dbReference type="eggNOG" id="KOG0246">
    <property type="taxonomic scope" value="Eukaryota"/>
</dbReference>
<dbReference type="HOGENOM" id="CLU_001485_19_2_1"/>
<dbReference type="InParanoid" id="Q6S004"/>
<dbReference type="OMA" id="ANNYQVY"/>
<dbReference type="PRO" id="PR:Q6S004"/>
<dbReference type="Proteomes" id="UP000002195">
    <property type="component" value="Chromosome 1"/>
</dbReference>
<dbReference type="GO" id="GO:0005813">
    <property type="term" value="C:centrosome"/>
    <property type="evidence" value="ECO:0000304"/>
    <property type="project" value="dictyBase"/>
</dbReference>
<dbReference type="GO" id="GO:0005737">
    <property type="term" value="C:cytoplasm"/>
    <property type="evidence" value="ECO:0007669"/>
    <property type="project" value="UniProtKB-KW"/>
</dbReference>
<dbReference type="GO" id="GO:0005874">
    <property type="term" value="C:microtubule"/>
    <property type="evidence" value="ECO:0000318"/>
    <property type="project" value="GO_Central"/>
</dbReference>
<dbReference type="GO" id="GO:0005524">
    <property type="term" value="F:ATP binding"/>
    <property type="evidence" value="ECO:0007669"/>
    <property type="project" value="UniProtKB-KW"/>
</dbReference>
<dbReference type="GO" id="GO:0008017">
    <property type="term" value="F:microtubule binding"/>
    <property type="evidence" value="ECO:0007669"/>
    <property type="project" value="InterPro"/>
</dbReference>
<dbReference type="GO" id="GO:0003777">
    <property type="term" value="F:microtubule motor activity"/>
    <property type="evidence" value="ECO:0000318"/>
    <property type="project" value="GO_Central"/>
</dbReference>
<dbReference type="GO" id="GO:0007019">
    <property type="term" value="P:microtubule depolymerization"/>
    <property type="evidence" value="ECO:0000318"/>
    <property type="project" value="GO_Central"/>
</dbReference>
<dbReference type="GO" id="GO:0007018">
    <property type="term" value="P:microtubule-based movement"/>
    <property type="evidence" value="ECO:0007669"/>
    <property type="project" value="InterPro"/>
</dbReference>
<dbReference type="GO" id="GO:0007052">
    <property type="term" value="P:mitotic spindle organization"/>
    <property type="evidence" value="ECO:0000315"/>
    <property type="project" value="dictyBase"/>
</dbReference>
<dbReference type="CDD" id="cd01367">
    <property type="entry name" value="KISc_KIF2_like"/>
    <property type="match status" value="1"/>
</dbReference>
<dbReference type="CDD" id="cd09541">
    <property type="entry name" value="SAM_KIF24-like"/>
    <property type="match status" value="1"/>
</dbReference>
<dbReference type="FunFam" id="3.40.850.10:FF:000012">
    <property type="entry name" value="Kinesin-like protein"/>
    <property type="match status" value="1"/>
</dbReference>
<dbReference type="Gene3D" id="3.40.850.10">
    <property type="entry name" value="Kinesin motor domain"/>
    <property type="match status" value="1"/>
</dbReference>
<dbReference type="Gene3D" id="1.10.150.50">
    <property type="entry name" value="Transcription Factor, Ets-1"/>
    <property type="match status" value="1"/>
</dbReference>
<dbReference type="InterPro" id="IPR027640">
    <property type="entry name" value="Kinesin-like_fam"/>
</dbReference>
<dbReference type="InterPro" id="IPR019821">
    <property type="entry name" value="Kinesin_motor_CS"/>
</dbReference>
<dbReference type="InterPro" id="IPR001752">
    <property type="entry name" value="Kinesin_motor_dom"/>
</dbReference>
<dbReference type="InterPro" id="IPR036961">
    <property type="entry name" value="Kinesin_motor_dom_sf"/>
</dbReference>
<dbReference type="InterPro" id="IPR027417">
    <property type="entry name" value="P-loop_NTPase"/>
</dbReference>
<dbReference type="InterPro" id="IPR001660">
    <property type="entry name" value="SAM"/>
</dbReference>
<dbReference type="InterPro" id="IPR013761">
    <property type="entry name" value="SAM/pointed_sf"/>
</dbReference>
<dbReference type="PANTHER" id="PTHR47971:SF8">
    <property type="entry name" value="KINESIN-LIKE PROTEIN"/>
    <property type="match status" value="1"/>
</dbReference>
<dbReference type="PANTHER" id="PTHR47971">
    <property type="entry name" value="KINESIN-RELATED PROTEIN 6"/>
    <property type="match status" value="1"/>
</dbReference>
<dbReference type="Pfam" id="PF00225">
    <property type="entry name" value="Kinesin"/>
    <property type="match status" value="1"/>
</dbReference>
<dbReference type="Pfam" id="PF00536">
    <property type="entry name" value="SAM_1"/>
    <property type="match status" value="1"/>
</dbReference>
<dbReference type="PRINTS" id="PR00380">
    <property type="entry name" value="KINESINHEAVY"/>
</dbReference>
<dbReference type="SMART" id="SM00129">
    <property type="entry name" value="KISc"/>
    <property type="match status" value="1"/>
</dbReference>
<dbReference type="SUPFAM" id="SSF52540">
    <property type="entry name" value="P-loop containing nucleoside triphosphate hydrolases"/>
    <property type="match status" value="1"/>
</dbReference>
<dbReference type="SUPFAM" id="SSF47769">
    <property type="entry name" value="SAM/Pointed domain"/>
    <property type="match status" value="1"/>
</dbReference>
<dbReference type="PROSITE" id="PS00411">
    <property type="entry name" value="KINESIN_MOTOR_1"/>
    <property type="match status" value="1"/>
</dbReference>
<dbReference type="PROSITE" id="PS50067">
    <property type="entry name" value="KINESIN_MOTOR_2"/>
    <property type="match status" value="1"/>
</dbReference>
<dbReference type="PROSITE" id="PS50105">
    <property type="entry name" value="SAM_DOMAIN"/>
    <property type="match status" value="1"/>
</dbReference>
<gene>
    <name type="primary">kif6</name>
    <name type="synonym">K6</name>
    <name type="synonym">ksnF</name>
    <name type="ORF">DDB_G0267404</name>
</gene>